<name>MNTA_LISIN</name>
<feature type="signal peptide" evidence="3">
    <location>
        <begin position="1"/>
        <end position="18"/>
    </location>
</feature>
<feature type="chain" id="PRO_0000031881" description="Manganese-binding lipoprotein MntA">
    <location>
        <begin position="19"/>
        <end position="310"/>
    </location>
</feature>
<feature type="binding site" evidence="2">
    <location>
        <position position="67"/>
    </location>
    <ligand>
        <name>Mn(2+)</name>
        <dbReference type="ChEBI" id="CHEBI:29035"/>
    </ligand>
</feature>
<feature type="binding site" evidence="2">
    <location>
        <position position="140"/>
    </location>
    <ligand>
        <name>Mn(2+)</name>
        <dbReference type="ChEBI" id="CHEBI:29035"/>
    </ligand>
</feature>
<feature type="binding site" evidence="2">
    <location>
        <position position="206"/>
    </location>
    <ligand>
        <name>Mn(2+)</name>
        <dbReference type="ChEBI" id="CHEBI:29035"/>
    </ligand>
</feature>
<feature type="binding site" evidence="2">
    <location>
        <position position="281"/>
    </location>
    <ligand>
        <name>Mn(2+)</name>
        <dbReference type="ChEBI" id="CHEBI:29035"/>
    </ligand>
</feature>
<feature type="lipid moiety-binding region" description="N-palmitoyl cysteine" evidence="3">
    <location>
        <position position="19"/>
    </location>
</feature>
<feature type="lipid moiety-binding region" description="S-diacylglycerol cysteine" evidence="3">
    <location>
        <position position="19"/>
    </location>
</feature>
<proteinExistence type="inferred from homology"/>
<sequence>MKKVIVGTLFALVLVLAGCSSQNSDTKKTGDKLNVVATYSILADIVKNVGGDKIELHSIVPVGVDPHEYDPLPDNIQSAADADLIFYNGLNLETGNGWFDRMLETADKSRDDKDQVVELSKGVKPKYLTEKGKTSETDPHAWLDLHNGIIYTENVRDALVKADPDNANFYKENAKKYIDKLATLDKEAKQKFADLPENQKTLVTSEGAFKYFAARYGLKAAYIWEINTESQGTPDQMKQIISIVEKERVPNLFVETSVDPRSMESVSKETGVPIFAKIFTDSTAKKGEEGDTYLEMMRYNLDKIHDGLAK</sequence>
<gene>
    <name type="primary">mntA</name>
    <name type="ordered locus">lin1961</name>
</gene>
<keyword id="KW-1003">Cell membrane</keyword>
<keyword id="KW-0449">Lipoprotein</keyword>
<keyword id="KW-0464">Manganese</keyword>
<keyword id="KW-0472">Membrane</keyword>
<keyword id="KW-0479">Metal-binding</keyword>
<keyword id="KW-0564">Palmitate</keyword>
<keyword id="KW-0732">Signal</keyword>
<keyword id="KW-0813">Transport</keyword>
<accession>Q92AG1</accession>
<evidence type="ECO:0000250" key="1">
    <source>
        <dbReference type="UniProtKB" id="O34385"/>
    </source>
</evidence>
<evidence type="ECO:0000250" key="2">
    <source>
        <dbReference type="UniProtKB" id="Q8Y653"/>
    </source>
</evidence>
<evidence type="ECO:0000255" key="3">
    <source>
        <dbReference type="PROSITE-ProRule" id="PRU00303"/>
    </source>
</evidence>
<evidence type="ECO:0000305" key="4"/>
<protein>
    <recommendedName>
        <fullName>Manganese-binding lipoprotein MntA</fullName>
    </recommendedName>
</protein>
<reference key="1">
    <citation type="journal article" date="2001" name="Science">
        <title>Comparative genomics of Listeria species.</title>
        <authorList>
            <person name="Glaser P."/>
            <person name="Frangeul L."/>
            <person name="Buchrieser C."/>
            <person name="Rusniok C."/>
            <person name="Amend A."/>
            <person name="Baquero F."/>
            <person name="Berche P."/>
            <person name="Bloecker H."/>
            <person name="Brandt P."/>
            <person name="Chakraborty T."/>
            <person name="Charbit A."/>
            <person name="Chetouani F."/>
            <person name="Couve E."/>
            <person name="de Daruvar A."/>
            <person name="Dehoux P."/>
            <person name="Domann E."/>
            <person name="Dominguez-Bernal G."/>
            <person name="Duchaud E."/>
            <person name="Durant L."/>
            <person name="Dussurget O."/>
            <person name="Entian K.-D."/>
            <person name="Fsihi H."/>
            <person name="Garcia-del Portillo F."/>
            <person name="Garrido P."/>
            <person name="Gautier L."/>
            <person name="Goebel W."/>
            <person name="Gomez-Lopez N."/>
            <person name="Hain T."/>
            <person name="Hauf J."/>
            <person name="Jackson D."/>
            <person name="Jones L.-M."/>
            <person name="Kaerst U."/>
            <person name="Kreft J."/>
            <person name="Kuhn M."/>
            <person name="Kunst F."/>
            <person name="Kurapkat G."/>
            <person name="Madueno E."/>
            <person name="Maitournam A."/>
            <person name="Mata Vicente J."/>
            <person name="Ng E."/>
            <person name="Nedjari H."/>
            <person name="Nordsiek G."/>
            <person name="Novella S."/>
            <person name="de Pablos B."/>
            <person name="Perez-Diaz J.-C."/>
            <person name="Purcell R."/>
            <person name="Remmel B."/>
            <person name="Rose M."/>
            <person name="Schlueter T."/>
            <person name="Simoes N."/>
            <person name="Tierrez A."/>
            <person name="Vazquez-Boland J.-A."/>
            <person name="Voss H."/>
            <person name="Wehland J."/>
            <person name="Cossart P."/>
        </authorList>
    </citation>
    <scope>NUCLEOTIDE SEQUENCE [LARGE SCALE GENOMIC DNA]</scope>
    <source>
        <strain>ATCC BAA-680 / CLIP 11262</strain>
    </source>
</reference>
<comment type="function">
    <text evidence="1">Probably part of ATP-binding cassette (ABC) transport system MntABCD involved in manganese import (By similarity). Binds manganese and delivers it to the membrane permease for translocation into the cytoplasm (By similarity).</text>
</comment>
<comment type="subcellular location">
    <subcellularLocation>
        <location evidence="3">Cell membrane</location>
        <topology evidence="3">Lipid-anchor</topology>
    </subcellularLocation>
</comment>
<comment type="similarity">
    <text evidence="4">Belongs to the bacterial solute-binding protein 9 family.</text>
</comment>
<dbReference type="EMBL" id="AL596170">
    <property type="protein sequence ID" value="CAC97191.1"/>
    <property type="molecule type" value="Genomic_DNA"/>
</dbReference>
<dbReference type="PIR" id="AG1677">
    <property type="entry name" value="AG1677"/>
</dbReference>
<dbReference type="RefSeq" id="WP_010991682.1">
    <property type="nucleotide sequence ID" value="NC_003212.1"/>
</dbReference>
<dbReference type="SMR" id="Q92AG1"/>
<dbReference type="STRING" id="272626.gene:17566319"/>
<dbReference type="GeneID" id="93235299"/>
<dbReference type="KEGG" id="lin:lin1961"/>
<dbReference type="eggNOG" id="COG0803">
    <property type="taxonomic scope" value="Bacteria"/>
</dbReference>
<dbReference type="HOGENOM" id="CLU_016838_1_1_9"/>
<dbReference type="OrthoDB" id="9793396at2"/>
<dbReference type="Proteomes" id="UP000002513">
    <property type="component" value="Chromosome"/>
</dbReference>
<dbReference type="GO" id="GO:0005886">
    <property type="term" value="C:plasma membrane"/>
    <property type="evidence" value="ECO:0007669"/>
    <property type="project" value="UniProtKB-SubCell"/>
</dbReference>
<dbReference type="GO" id="GO:0046872">
    <property type="term" value="F:metal ion binding"/>
    <property type="evidence" value="ECO:0007669"/>
    <property type="project" value="UniProtKB-KW"/>
</dbReference>
<dbReference type="GO" id="GO:0007155">
    <property type="term" value="P:cell adhesion"/>
    <property type="evidence" value="ECO:0007669"/>
    <property type="project" value="InterPro"/>
</dbReference>
<dbReference type="GO" id="GO:0030001">
    <property type="term" value="P:metal ion transport"/>
    <property type="evidence" value="ECO:0007669"/>
    <property type="project" value="InterPro"/>
</dbReference>
<dbReference type="CDD" id="cd01137">
    <property type="entry name" value="PsaA"/>
    <property type="match status" value="1"/>
</dbReference>
<dbReference type="Gene3D" id="3.40.50.1980">
    <property type="entry name" value="Nitrogenase molybdenum iron protein domain"/>
    <property type="match status" value="2"/>
</dbReference>
<dbReference type="InterPro" id="IPR006129">
    <property type="entry name" value="AdhesinB"/>
</dbReference>
<dbReference type="InterPro" id="IPR050492">
    <property type="entry name" value="Bact_metal-bind_prot9"/>
</dbReference>
<dbReference type="InterPro" id="IPR006128">
    <property type="entry name" value="Lipoprotein_PsaA-like"/>
</dbReference>
<dbReference type="InterPro" id="IPR006127">
    <property type="entry name" value="ZnuA-like"/>
</dbReference>
<dbReference type="PANTHER" id="PTHR42953">
    <property type="entry name" value="HIGH-AFFINITY ZINC UPTAKE SYSTEM PROTEIN ZNUA-RELATED"/>
    <property type="match status" value="1"/>
</dbReference>
<dbReference type="PANTHER" id="PTHR42953:SF1">
    <property type="entry name" value="METAL-BINDING PROTEIN HI_0362-RELATED"/>
    <property type="match status" value="1"/>
</dbReference>
<dbReference type="Pfam" id="PF01297">
    <property type="entry name" value="ZnuA"/>
    <property type="match status" value="1"/>
</dbReference>
<dbReference type="PRINTS" id="PR00691">
    <property type="entry name" value="ADHESINB"/>
</dbReference>
<dbReference type="PRINTS" id="PR00690">
    <property type="entry name" value="ADHESNFAMILY"/>
</dbReference>
<dbReference type="SUPFAM" id="SSF53807">
    <property type="entry name" value="Helical backbone' metal receptor"/>
    <property type="match status" value="1"/>
</dbReference>
<dbReference type="PROSITE" id="PS51257">
    <property type="entry name" value="PROKAR_LIPOPROTEIN"/>
    <property type="match status" value="1"/>
</dbReference>
<organism>
    <name type="scientific">Listeria innocua serovar 6a (strain ATCC BAA-680 / CLIP 11262)</name>
    <dbReference type="NCBI Taxonomy" id="272626"/>
    <lineage>
        <taxon>Bacteria</taxon>
        <taxon>Bacillati</taxon>
        <taxon>Bacillota</taxon>
        <taxon>Bacilli</taxon>
        <taxon>Bacillales</taxon>
        <taxon>Listeriaceae</taxon>
        <taxon>Listeria</taxon>
    </lineage>
</organism>